<gene>
    <name evidence="1" type="primary">gH</name>
</gene>
<proteinExistence type="inferred from homology"/>
<name>GH_EHV4</name>
<organism>
    <name type="scientific">Equine herpesvirus 4 (strain 1942)</name>
    <name type="common">EHV-4</name>
    <name type="synonym">Equine rhinopneumonitis virus</name>
    <dbReference type="NCBI Taxonomy" id="10333"/>
    <lineage>
        <taxon>Viruses</taxon>
        <taxon>Duplodnaviria</taxon>
        <taxon>Heunggongvirae</taxon>
        <taxon>Peploviricota</taxon>
        <taxon>Herviviricetes</taxon>
        <taxon>Herpesvirales</taxon>
        <taxon>Orthoherpesviridae</taxon>
        <taxon>Alphaherpesvirinae</taxon>
        <taxon>Varicellovirus</taxon>
        <taxon>Varicellovirus equidalpha4</taxon>
        <taxon>Equid alphaherpesvirus 4</taxon>
    </lineage>
</organism>
<feature type="signal peptide" evidence="1">
    <location>
        <begin position="1"/>
        <end position="19"/>
    </location>
</feature>
<feature type="chain" id="PRO_0000038240" description="Envelope glycoprotein H" evidence="1">
    <location>
        <begin position="20"/>
        <end position="855"/>
    </location>
</feature>
<feature type="topological domain" description="Virion surface" evidence="1">
    <location>
        <begin position="20"/>
        <end position="815"/>
    </location>
</feature>
<feature type="transmembrane region" description="Helical" evidence="1">
    <location>
        <begin position="816"/>
        <end position="836"/>
    </location>
</feature>
<feature type="topological domain" description="Intravirion" evidence="1">
    <location>
        <begin position="837"/>
        <end position="855"/>
    </location>
</feature>
<feature type="region of interest" description="Disordered" evidence="2">
    <location>
        <begin position="174"/>
        <end position="195"/>
    </location>
</feature>
<feature type="region of interest" description="Interaction with gL" evidence="1">
    <location>
        <begin position="247"/>
        <end position="310"/>
    </location>
</feature>
<feature type="glycosylation site" description="N-linked (GlcNAc...) asparagine; by host" evidence="1">
    <location>
        <position position="42"/>
    </location>
</feature>
<feature type="glycosylation site" description="N-linked (GlcNAc...) asparagine; by host" evidence="1">
    <location>
        <position position="48"/>
    </location>
</feature>
<feature type="glycosylation site" description="N-linked (GlcNAc...) asparagine; by host" evidence="1">
    <location>
        <position position="52"/>
    </location>
</feature>
<feature type="glycosylation site" description="N-linked (GlcNAc...) asparagine; by host" evidence="1">
    <location>
        <position position="68"/>
    </location>
</feature>
<feature type="glycosylation site" description="N-linked (GlcNAc...) asparagine; by host" evidence="1">
    <location>
        <position position="126"/>
    </location>
</feature>
<feature type="glycosylation site" description="N-linked (GlcNAc...) asparagine; by host" evidence="1">
    <location>
        <position position="189"/>
    </location>
</feature>
<feature type="glycosylation site" description="N-linked (GlcNAc...) asparagine; by host" evidence="1">
    <location>
        <position position="217"/>
    </location>
</feature>
<feature type="glycosylation site" description="N-linked (GlcNAc...) asparagine; by host" evidence="1">
    <location>
        <position position="503"/>
    </location>
</feature>
<feature type="glycosylation site" description="N-linked (GlcNAc...) asparagine; by host" evidence="1">
    <location>
        <position position="679"/>
    </location>
</feature>
<feature type="glycosylation site" description="N-linked (GlcNAc...) asparagine; by host" evidence="1">
    <location>
        <position position="773"/>
    </location>
</feature>
<feature type="glycosylation site" description="N-linked (GlcNAc...) asparagine; by host" evidence="1">
    <location>
        <position position="796"/>
    </location>
</feature>
<dbReference type="EMBL" id="D14486">
    <property type="protein sequence ID" value="BAA03379.1"/>
    <property type="molecule type" value="Genomic_DNA"/>
</dbReference>
<dbReference type="PIR" id="A36656">
    <property type="entry name" value="VGBE41"/>
</dbReference>
<dbReference type="SMR" id="P24430"/>
<dbReference type="GlyCosmos" id="P24430">
    <property type="glycosylation" value="11 sites, No reported glycans"/>
</dbReference>
<dbReference type="KEGG" id="vg:1487605"/>
<dbReference type="GO" id="GO:0044175">
    <property type="term" value="C:host cell endosome membrane"/>
    <property type="evidence" value="ECO:0007669"/>
    <property type="project" value="UniProtKB-SubCell"/>
</dbReference>
<dbReference type="GO" id="GO:0020002">
    <property type="term" value="C:host cell plasma membrane"/>
    <property type="evidence" value="ECO:0007669"/>
    <property type="project" value="UniProtKB-SubCell"/>
</dbReference>
<dbReference type="GO" id="GO:0016020">
    <property type="term" value="C:membrane"/>
    <property type="evidence" value="ECO:0007669"/>
    <property type="project" value="UniProtKB-KW"/>
</dbReference>
<dbReference type="GO" id="GO:0019031">
    <property type="term" value="C:viral envelope"/>
    <property type="evidence" value="ECO:0007669"/>
    <property type="project" value="UniProtKB-KW"/>
</dbReference>
<dbReference type="GO" id="GO:0055036">
    <property type="term" value="C:virion membrane"/>
    <property type="evidence" value="ECO:0007669"/>
    <property type="project" value="UniProtKB-SubCell"/>
</dbReference>
<dbReference type="GO" id="GO:0019064">
    <property type="term" value="P:fusion of virus membrane with host plasma membrane"/>
    <property type="evidence" value="ECO:0007669"/>
    <property type="project" value="UniProtKB-KW"/>
</dbReference>
<dbReference type="GO" id="GO:0046718">
    <property type="term" value="P:symbiont entry into host cell"/>
    <property type="evidence" value="ECO:0007669"/>
    <property type="project" value="UniProtKB-KW"/>
</dbReference>
<dbReference type="Gene3D" id="1.20.58.1340">
    <property type="match status" value="1"/>
</dbReference>
<dbReference type="Gene3D" id="3.30.500.50">
    <property type="match status" value="1"/>
</dbReference>
<dbReference type="Gene3D" id="2.60.40.3190">
    <property type="entry name" value="Herpesvirus glycoprotein H, C-terminal domain"/>
    <property type="match status" value="1"/>
</dbReference>
<dbReference type="HAMAP" id="MF_04033">
    <property type="entry name" value="HSV_GH"/>
    <property type="match status" value="1"/>
</dbReference>
<dbReference type="InterPro" id="IPR003493">
    <property type="entry name" value="Herpes_gH"/>
</dbReference>
<dbReference type="InterPro" id="IPR035305">
    <property type="entry name" value="Herpes_glycoH_C"/>
</dbReference>
<dbReference type="InterPro" id="IPR038172">
    <property type="entry name" value="Herpes_glycoH_C_sf"/>
</dbReference>
<dbReference type="Pfam" id="PF17488">
    <property type="entry name" value="Herpes_glycoH_C"/>
    <property type="match status" value="1"/>
</dbReference>
<dbReference type="Pfam" id="PF02489">
    <property type="entry name" value="Herpes_glycop_H"/>
    <property type="match status" value="1"/>
</dbReference>
<sequence length="855" mass="94086">MSQPYLKIAILVAATIVSAIPVWTTPVSTSPPQQTKLHYVGNGTWVHNNTFNVTRYDRITMEPVYNNNLSSTTFFVAISERNFRTVNTPLGASVFWILKSALNPPKHQPCIANVPEPGDPRGPCVNSTVSLFFNDNLEPFLMTKNLLEFEVLPDNYITGWTFERSKTVATKGNPVGVVLSPPRTSPDVNNTIRDDGTPKQHLSIIDEHTTFVLDLQNFTKTLTYISPFAAVWPITAFHAGITVMGCDTTQAIAYLGNGFMGLQISSVNNPPLEMIVAPNDVRARIVNRLPPRRRLEPPGPYAGPIYKVYVLSDGNFYLGHGMSKISREVAAYPEESLDYRYHLSLANLDTLAMLAELSSGKSKDVSYYLYRIIARLAVATFSLAEVIRLSDYMLLQEAIDVDINLRLIVPLVMKYAAGGTADSSYTSSDVAMDQFEVAQAQIEKIVADINIENELRKPMYEHRSLLKSVYAYSRKPLPNAVSFANRLITAMYKEAIKDRITWNSTMREVLFFAVGAAAGSHVILTDGPDLGLHAHKDSSMFLSLNRNILLLCTAMCTASHAVSAGVKLEEVMAGLIAGGVQFSLLEVFSPCMASARFDLAEEEHVLDLLSVIPPRLYTDLNTGLEDDGTTIHSYGRSANGILNSRIAYNFDAVRVFTPELASCSTKLPKVLVVLPLASNRSYVITRTAPNIGLTYSLDGVNIAKPIVISYITYGNCQVSRATIRSVYLDHPGHTQSCVYCGSVFMRYMASGAIMDLIYIDDKDVELQLVAGENSTIPAFNPKLYTPSMNALLMFPNGTVTLMSAFASYSAFKIPSTYLWASIGGLLLAILILYVIVKMLCGGVINNDYSLLLNSE</sequence>
<keyword id="KW-1169">Fusion of virus membrane with host cell membrane</keyword>
<keyword id="KW-1168">Fusion of virus membrane with host membrane</keyword>
<keyword id="KW-0325">Glycoprotein</keyword>
<keyword id="KW-1032">Host cell membrane</keyword>
<keyword id="KW-1039">Host endosome</keyword>
<keyword id="KW-1043">Host membrane</keyword>
<keyword id="KW-0472">Membrane</keyword>
<keyword id="KW-0730">Sialic acid</keyword>
<keyword id="KW-0732">Signal</keyword>
<keyword id="KW-0812">Transmembrane</keyword>
<keyword id="KW-1133">Transmembrane helix</keyword>
<keyword id="KW-0261">Viral envelope protein</keyword>
<keyword id="KW-1162">Viral penetration into host cytoplasm</keyword>
<keyword id="KW-0946">Virion</keyword>
<keyword id="KW-1160">Virus entry into host cell</keyword>
<comment type="function">
    <text evidence="1">The heterodimer glycoprotein H-glycoprotein L is required for the fusion of viral and plasma membranes leading to virus entry into the host cell. Following initial binding to host receptor, membrane fusion is mediated by the fusion machinery composed of gB and the heterodimer gH/gL. May also be involved in the fusion between the virion envelope and the outer nuclear membrane during virion morphogenesis.</text>
</comment>
<comment type="subunit">
    <text evidence="1">Interacts with glycoprotein L (gL); this interaction is necessary for the correct processing and cell surface expression of gH. The heterodimer gH/gL seems to interact with gB trimers during fusion.</text>
</comment>
<comment type="subcellular location">
    <subcellularLocation>
        <location evidence="1">Virion membrane</location>
        <topology evidence="1">Single-pass type I membrane protein</topology>
    </subcellularLocation>
    <subcellularLocation>
        <location evidence="1">Host cell membrane</location>
        <topology evidence="1">Single-pass type I membrane protein</topology>
    </subcellularLocation>
    <subcellularLocation>
        <location evidence="1">Host endosome membrane</location>
        <topology evidence="1">Single-pass type I membrane protein</topology>
    </subcellularLocation>
    <text evidence="1">During virion morphogenesis, this protein probably accumulates in the endosomes and trans-Golgi where secondary envelopment occurs. It is probably transported to the cell surface from where it is endocytosed and directed to the trans-Golgi network (TGN).</text>
</comment>
<comment type="PTM">
    <text evidence="1">N-glycosylated, O-glycosylated, and sialylated.</text>
</comment>
<comment type="similarity">
    <text evidence="1">Belongs to the herpesviridae glycoprotein H family.</text>
</comment>
<reference key="1">
    <citation type="journal article" date="1990" name="J. Gen. Virol.">
        <title>The nucleotide sequence of an equine herpesvirus 4 gene homologue of the herpes simplex virus 1 glycoprotein H gene.</title>
        <authorList>
            <person name="Nicolson L."/>
            <person name="Cullinane A.A."/>
            <person name="Onions D.E."/>
        </authorList>
    </citation>
    <scope>NUCLEOTIDE SEQUENCE [GENOMIC DNA]</scope>
</reference>
<accession>P24430</accession>
<evidence type="ECO:0000255" key="1">
    <source>
        <dbReference type="HAMAP-Rule" id="MF_04033"/>
    </source>
</evidence>
<evidence type="ECO:0000256" key="2">
    <source>
        <dbReference type="SAM" id="MobiDB-lite"/>
    </source>
</evidence>
<protein>
    <recommendedName>
        <fullName evidence="1">Envelope glycoprotein H</fullName>
        <shortName evidence="1">gH</shortName>
    </recommendedName>
</protein>
<organismHost>
    <name type="scientific">Equus caballus</name>
    <name type="common">Horse</name>
    <dbReference type="NCBI Taxonomy" id="9796"/>
</organismHost>